<feature type="chain" id="PRO_0000158412" description="Ribose-5-phosphate isomerase A">
    <location>
        <begin position="1"/>
        <end position="219"/>
    </location>
</feature>
<feature type="active site" description="Proton acceptor" evidence="1 4">
    <location>
        <position position="103"/>
    </location>
</feature>
<feature type="binding site" evidence="4">
    <location>
        <begin position="28"/>
        <end position="31"/>
    </location>
    <ligand>
        <name>substrate</name>
    </ligand>
</feature>
<feature type="binding site" evidence="4">
    <location>
        <begin position="81"/>
        <end position="84"/>
    </location>
    <ligand>
        <name>substrate</name>
    </ligand>
</feature>
<feature type="binding site" evidence="4">
    <location>
        <begin position="94"/>
        <end position="97"/>
    </location>
    <ligand>
        <name>substrate</name>
    </ligand>
</feature>
<feature type="binding site" evidence="4">
    <location>
        <position position="121"/>
    </location>
    <ligand>
        <name>substrate</name>
    </ligand>
</feature>
<feature type="mutagenesis site" description="Catalytic efficiency decreases by 10,000-fold, with no measurable effect on affinity binding." evidence="4">
    <original>D</original>
    <variation>A</variation>
    <location>
        <position position="81"/>
    </location>
</feature>
<feature type="mutagenesis site" description="Activity decreases by 250-fold, with little change on affinity binding." evidence="4">
    <original>D</original>
    <variation>A</variation>
    <location>
        <position position="84"/>
    </location>
</feature>
<feature type="mutagenesis site" description="Has a 1500-fold lower Catalytic efficiency than the wild-type, but affinity binding is increased by a factor of seven." evidence="4">
    <original>K</original>
    <variation>A</variation>
    <location>
        <position position="94"/>
    </location>
</feature>
<feature type="helix" evidence="8">
    <location>
        <begin position="3"/>
        <end position="13"/>
    </location>
</feature>
<feature type="helix" evidence="8">
    <location>
        <begin position="14"/>
        <end position="16"/>
    </location>
</feature>
<feature type="strand" evidence="8">
    <location>
        <begin position="24"/>
        <end position="26"/>
    </location>
</feature>
<feature type="helix" evidence="8">
    <location>
        <begin position="32"/>
        <end position="40"/>
    </location>
</feature>
<feature type="turn" evidence="8">
    <location>
        <begin position="41"/>
        <end position="45"/>
    </location>
</feature>
<feature type="strand" evidence="8">
    <location>
        <begin position="49"/>
        <end position="52"/>
    </location>
</feature>
<feature type="helix" evidence="8">
    <location>
        <begin position="56"/>
        <end position="62"/>
    </location>
</feature>
<feature type="helix" evidence="8">
    <location>
        <begin position="70"/>
        <end position="72"/>
    </location>
</feature>
<feature type="strand" evidence="8">
    <location>
        <begin position="76"/>
        <end position="81"/>
    </location>
</feature>
<feature type="strand" evidence="8">
    <location>
        <begin position="84"/>
        <end position="86"/>
    </location>
</feature>
<feature type="strand" evidence="7">
    <location>
        <begin position="96"/>
        <end position="98"/>
    </location>
</feature>
<feature type="helix" evidence="8">
    <location>
        <begin position="100"/>
        <end position="109"/>
    </location>
</feature>
<feature type="strand" evidence="8">
    <location>
        <begin position="110"/>
        <end position="118"/>
    </location>
</feature>
<feature type="helix" evidence="8">
    <location>
        <begin position="119"/>
        <end position="121"/>
    </location>
</feature>
<feature type="strand" evidence="8">
    <location>
        <begin position="124"/>
        <end position="126"/>
    </location>
</feature>
<feature type="strand" evidence="8">
    <location>
        <begin position="131"/>
        <end position="135"/>
    </location>
</feature>
<feature type="helix" evidence="8">
    <location>
        <begin position="137"/>
        <end position="139"/>
    </location>
</feature>
<feature type="helix" evidence="8">
    <location>
        <begin position="140"/>
        <end position="149"/>
    </location>
</feature>
<feature type="strand" evidence="8">
    <location>
        <begin position="153"/>
        <end position="156"/>
    </location>
</feature>
<feature type="strand" evidence="8">
    <location>
        <begin position="167"/>
        <end position="173"/>
    </location>
</feature>
<feature type="helix" evidence="8">
    <location>
        <begin position="179"/>
        <end position="187"/>
    </location>
</feature>
<feature type="strand" evidence="8">
    <location>
        <begin position="192"/>
        <end position="198"/>
    </location>
</feature>
<feature type="strand" evidence="8">
    <location>
        <begin position="204"/>
        <end position="210"/>
    </location>
</feature>
<feature type="strand" evidence="8">
    <location>
        <begin position="213"/>
        <end position="217"/>
    </location>
</feature>
<protein>
    <recommendedName>
        <fullName evidence="1">Ribose-5-phosphate isomerase A</fullName>
        <ecNumber evidence="1">5.3.1.6</ecNumber>
    </recommendedName>
    <alternativeName>
        <fullName evidence="1">Phosphoriboisomerase A</fullName>
        <shortName evidence="1">PRI</shortName>
    </alternativeName>
</protein>
<name>RPIA_ECOLI</name>
<comment type="function">
    <text evidence="2 4 5">Involved in the first step of the non-oxidative branch of the pentose phosphate pathway. It catalyzes the reversible conversion of ribose-5-phosphate to ribulose 5-phosphate. Can also act on D-ribose-5-diphosphate and D-ribose-5-triphosphate as substrate.</text>
</comment>
<comment type="catalytic activity">
    <reaction evidence="1 2 4">
        <text>aldehydo-D-ribose 5-phosphate = D-ribulose 5-phosphate</text>
        <dbReference type="Rhea" id="RHEA:14657"/>
        <dbReference type="ChEBI" id="CHEBI:58121"/>
        <dbReference type="ChEBI" id="CHEBI:58273"/>
        <dbReference type="EC" id="5.3.1.6"/>
    </reaction>
</comment>
<comment type="activity regulation">
    <text evidence="4">Inhibited by arabinose-5-phosphate, D-erythrose-4-phosphate and D-erythronic acid.</text>
</comment>
<comment type="biophysicochemical properties">
    <kinetics>
        <KM evidence="4">3.1 mM for ribose-5-phosphate</KM>
        <KM evidence="2">4.4 mM for D-ribose 5-phosphate (at 37 degrees Celsius)</KM>
        <text>kcat is 2100 sec(-1) for ribose-5-phosphate.</text>
    </kinetics>
    <temperatureDependence>
        <text evidence="2 4">After incubation at 45 degrees Celsius for 30 minutes RpiA retains 90% of its original activities.</text>
    </temperatureDependence>
</comment>
<comment type="pathway">
    <text evidence="1">Carbohydrate degradation; pentose phosphate pathway; D-ribose 5-phosphate from D-ribulose 5-phosphate (non-oxidative stage): step 1/1.</text>
</comment>
<comment type="subunit">
    <text evidence="1 4">Homodimer.</text>
</comment>
<comment type="interaction">
    <interactant intactId="EBI-909486">
        <id>P0A7Z0</id>
    </interactant>
    <interactant intactId="EBI-909486">
        <id>P0A7Z0</id>
        <label>rpiA</label>
    </interactant>
    <organismsDiffer>false</organismsDiffer>
    <experiments>2</experiments>
</comment>
<comment type="induction">
    <text evidence="2 3 4">Constitutively expressed.</text>
</comment>
<comment type="similarity">
    <text evidence="1">Belongs to the ribose 5-phosphate isomerase family.</text>
</comment>
<comment type="sequence caution" evidence="6">
    <conflict type="erroneous initiation">
        <sequence resource="EMBL-CDS" id="CAA47309"/>
    </conflict>
    <text>Extended N-terminus.</text>
</comment>
<organism>
    <name type="scientific">Escherichia coli (strain K12)</name>
    <dbReference type="NCBI Taxonomy" id="83333"/>
    <lineage>
        <taxon>Bacteria</taxon>
        <taxon>Pseudomonadati</taxon>
        <taxon>Pseudomonadota</taxon>
        <taxon>Gammaproteobacteria</taxon>
        <taxon>Enterobacterales</taxon>
        <taxon>Enterobacteriaceae</taxon>
        <taxon>Escherichia</taxon>
    </lineage>
</organism>
<evidence type="ECO:0000255" key="1">
    <source>
        <dbReference type="HAMAP-Rule" id="MF_00170"/>
    </source>
</evidence>
<evidence type="ECO:0000269" key="2">
    <source>
    </source>
</evidence>
<evidence type="ECO:0000269" key="3">
    <source>
    </source>
</evidence>
<evidence type="ECO:0000269" key="4">
    <source>
    </source>
</evidence>
<evidence type="ECO:0000269" key="5">
    <source>
    </source>
</evidence>
<evidence type="ECO:0000305" key="6"/>
<evidence type="ECO:0007829" key="7">
    <source>
        <dbReference type="PDB" id="1KS2"/>
    </source>
</evidence>
<evidence type="ECO:0007829" key="8">
    <source>
        <dbReference type="PDB" id="1O8B"/>
    </source>
</evidence>
<proteinExistence type="evidence at protein level"/>
<gene>
    <name evidence="1" type="primary">rpiA</name>
    <name type="synonym">ygfC</name>
    <name type="ordered locus">b2914</name>
    <name type="ordered locus">JW5475</name>
</gene>
<dbReference type="EC" id="5.3.1.6" evidence="1"/>
<dbReference type="EMBL" id="X73026">
    <property type="protein sequence ID" value="CAA51509.1"/>
    <property type="molecule type" value="Genomic_DNA"/>
</dbReference>
<dbReference type="EMBL" id="X66836">
    <property type="protein sequence ID" value="CAA47309.1"/>
    <property type="status" value="ALT_INIT"/>
    <property type="molecule type" value="Genomic_DNA"/>
</dbReference>
<dbReference type="EMBL" id="U28377">
    <property type="protein sequence ID" value="AAA69081.1"/>
    <property type="molecule type" value="Genomic_DNA"/>
</dbReference>
<dbReference type="EMBL" id="U00096">
    <property type="protein sequence ID" value="AAC75951.1"/>
    <property type="molecule type" value="Genomic_DNA"/>
</dbReference>
<dbReference type="EMBL" id="AP009048">
    <property type="protein sequence ID" value="BAE76978.1"/>
    <property type="molecule type" value="Genomic_DNA"/>
</dbReference>
<dbReference type="EMBL" id="M64630">
    <property type="protein sequence ID" value="AAA73015.1"/>
    <property type="molecule type" value="Genomic_DNA"/>
</dbReference>
<dbReference type="PIR" id="A65076">
    <property type="entry name" value="A65076"/>
</dbReference>
<dbReference type="RefSeq" id="NP_417389.1">
    <property type="nucleotide sequence ID" value="NC_000913.3"/>
</dbReference>
<dbReference type="RefSeq" id="WP_000189743.1">
    <property type="nucleotide sequence ID" value="NZ_STEB01000001.1"/>
</dbReference>
<dbReference type="PDB" id="1KS2">
    <property type="method" value="X-ray"/>
    <property type="resolution" value="1.50 A"/>
    <property type="chains" value="A/B=1-219"/>
</dbReference>
<dbReference type="PDB" id="1LKZ">
    <property type="method" value="X-ray"/>
    <property type="resolution" value="2.50 A"/>
    <property type="chains" value="A/B=1-219"/>
</dbReference>
<dbReference type="PDB" id="1O8B">
    <property type="method" value="X-ray"/>
    <property type="resolution" value="1.25 A"/>
    <property type="chains" value="A/B=1-219"/>
</dbReference>
<dbReference type="PDBsum" id="1KS2"/>
<dbReference type="PDBsum" id="1LKZ"/>
<dbReference type="PDBsum" id="1O8B"/>
<dbReference type="SMR" id="P0A7Z0"/>
<dbReference type="BioGRID" id="4259674">
    <property type="interactions" value="29"/>
</dbReference>
<dbReference type="DIP" id="DIP-10739N"/>
<dbReference type="FunCoup" id="P0A7Z0">
    <property type="interactions" value="687"/>
</dbReference>
<dbReference type="STRING" id="511145.b2914"/>
<dbReference type="jPOST" id="P0A7Z0"/>
<dbReference type="PaxDb" id="511145-b2914"/>
<dbReference type="EnsemblBacteria" id="AAC75951">
    <property type="protein sequence ID" value="AAC75951"/>
    <property type="gene ID" value="b2914"/>
</dbReference>
<dbReference type="GeneID" id="93779085"/>
<dbReference type="GeneID" id="947407"/>
<dbReference type="KEGG" id="ecj:JW5475"/>
<dbReference type="KEGG" id="eco:b2914"/>
<dbReference type="KEGG" id="ecoc:C3026_15970"/>
<dbReference type="PATRIC" id="fig|1411691.4.peg.3819"/>
<dbReference type="EchoBASE" id="EB1413"/>
<dbReference type="eggNOG" id="COG0120">
    <property type="taxonomic scope" value="Bacteria"/>
</dbReference>
<dbReference type="HOGENOM" id="CLU_056590_1_1_6"/>
<dbReference type="InParanoid" id="P0A7Z0"/>
<dbReference type="OMA" id="ACHVQEK"/>
<dbReference type="OrthoDB" id="5870696at2"/>
<dbReference type="PhylomeDB" id="P0A7Z0"/>
<dbReference type="BioCyc" id="EcoCyc:RIB5PISOMA-MONOMER"/>
<dbReference type="BioCyc" id="MetaCyc:RIB5PISOMA-MONOMER"/>
<dbReference type="BRENDA" id="5.3.1.6">
    <property type="organism ID" value="2026"/>
</dbReference>
<dbReference type="SABIO-RK" id="P0A7Z0"/>
<dbReference type="UniPathway" id="UPA00115">
    <property type="reaction ID" value="UER00412"/>
</dbReference>
<dbReference type="EvolutionaryTrace" id="P0A7Z0"/>
<dbReference type="PRO" id="PR:P0A7Z0"/>
<dbReference type="Proteomes" id="UP000000625">
    <property type="component" value="Chromosome"/>
</dbReference>
<dbReference type="GO" id="GO:0005829">
    <property type="term" value="C:cytosol"/>
    <property type="evidence" value="ECO:0000314"/>
    <property type="project" value="EcoCyc"/>
</dbReference>
<dbReference type="GO" id="GO:0042802">
    <property type="term" value="F:identical protein binding"/>
    <property type="evidence" value="ECO:0000353"/>
    <property type="project" value="IntAct"/>
</dbReference>
<dbReference type="GO" id="GO:0042803">
    <property type="term" value="F:protein homodimerization activity"/>
    <property type="evidence" value="ECO:0000314"/>
    <property type="project" value="EcoCyc"/>
</dbReference>
<dbReference type="GO" id="GO:0004751">
    <property type="term" value="F:ribose-5-phosphate isomerase activity"/>
    <property type="evidence" value="ECO:0000314"/>
    <property type="project" value="EcoCyc"/>
</dbReference>
<dbReference type="GO" id="GO:0006014">
    <property type="term" value="P:D-ribose metabolic process"/>
    <property type="evidence" value="ECO:0000315"/>
    <property type="project" value="EcoCyc"/>
</dbReference>
<dbReference type="GO" id="GO:0009052">
    <property type="term" value="P:pentose-phosphate shunt, non-oxidative branch"/>
    <property type="evidence" value="ECO:0000318"/>
    <property type="project" value="GO_Central"/>
</dbReference>
<dbReference type="CDD" id="cd01398">
    <property type="entry name" value="RPI_A"/>
    <property type="match status" value="1"/>
</dbReference>
<dbReference type="FunFam" id="3.30.70.260:FF:000004">
    <property type="entry name" value="Ribose-5-phosphate isomerase A"/>
    <property type="match status" value="1"/>
</dbReference>
<dbReference type="FunFam" id="3.40.50.1360:FF:000001">
    <property type="entry name" value="Ribose-5-phosphate isomerase A"/>
    <property type="match status" value="1"/>
</dbReference>
<dbReference type="Gene3D" id="3.30.70.260">
    <property type="match status" value="1"/>
</dbReference>
<dbReference type="Gene3D" id="3.40.50.1360">
    <property type="match status" value="1"/>
</dbReference>
<dbReference type="HAMAP" id="MF_00170">
    <property type="entry name" value="Rib_5P_isom_A"/>
    <property type="match status" value="1"/>
</dbReference>
<dbReference type="InterPro" id="IPR037171">
    <property type="entry name" value="NagB/RpiA_transferase-like"/>
</dbReference>
<dbReference type="InterPro" id="IPR020672">
    <property type="entry name" value="Ribose5P_isomerase_typA_subgr"/>
</dbReference>
<dbReference type="InterPro" id="IPR004788">
    <property type="entry name" value="Ribose5P_isomerase_type_A"/>
</dbReference>
<dbReference type="NCBIfam" id="NF001924">
    <property type="entry name" value="PRK00702.1"/>
    <property type="match status" value="1"/>
</dbReference>
<dbReference type="NCBIfam" id="TIGR00021">
    <property type="entry name" value="rpiA"/>
    <property type="match status" value="1"/>
</dbReference>
<dbReference type="PANTHER" id="PTHR11934">
    <property type="entry name" value="RIBOSE-5-PHOSPHATE ISOMERASE"/>
    <property type="match status" value="1"/>
</dbReference>
<dbReference type="PANTHER" id="PTHR11934:SF0">
    <property type="entry name" value="RIBOSE-5-PHOSPHATE ISOMERASE"/>
    <property type="match status" value="1"/>
</dbReference>
<dbReference type="Pfam" id="PF06026">
    <property type="entry name" value="Rib_5-P_isom_A"/>
    <property type="match status" value="1"/>
</dbReference>
<dbReference type="SUPFAM" id="SSF75445">
    <property type="entry name" value="D-ribose-5-phosphate isomerase (RpiA), lid domain"/>
    <property type="match status" value="1"/>
</dbReference>
<dbReference type="SUPFAM" id="SSF100950">
    <property type="entry name" value="NagB/RpiA/CoA transferase-like"/>
    <property type="match status" value="1"/>
</dbReference>
<sequence>MTQDELKKAVGWAALQYVQPGTIVGVGTGSTAAHFIDALGTMKGQIEGAVSSSDASTEKLKSLGIHVFDLNEVDSLGIYVDGADEINGHMQMIKGGGAALTREKIIASVAEKFICIADASKQVDILGKFPLPVEVIPMARSAVARQLVKLGGRPEYRQGVVTDNGNVILDVHGMEILDPIAMENAINAIPGVVTVGLFANRGADVALIGTPDGVKTIVK</sequence>
<accession>P0A7Z0</accession>
<accession>P27252</accession>
<accession>Q2M9S8</accession>
<reference key="1">
    <citation type="journal article" date="1993" name="J. Bacteriol.">
        <title>Escherichia coli rpiA gene encoding ribose phosphate isomerase A.</title>
        <authorList>
            <person name="Hove-Jensen B."/>
            <person name="Maigaard M."/>
        </authorList>
    </citation>
    <scope>NUCLEOTIDE SEQUENCE [GENOMIC DNA]</scope>
    <scope>PROTEIN SEQUENCE OF 1-10</scope>
    <source>
        <strain>K12</strain>
    </source>
</reference>
<reference key="2">
    <citation type="submission" date="1992-06" db="EMBL/GenBank/DDBJ databases">
        <authorList>
            <person name="Roy I."/>
            <person name="Leadlay P.F."/>
        </authorList>
    </citation>
    <scope>NUCLEOTIDE SEQUENCE [GENOMIC DNA]</scope>
    <source>
        <strain>K12</strain>
    </source>
</reference>
<reference key="3">
    <citation type="journal article" date="1997" name="Science">
        <title>The complete genome sequence of Escherichia coli K-12.</title>
        <authorList>
            <person name="Blattner F.R."/>
            <person name="Plunkett G. III"/>
            <person name="Bloch C.A."/>
            <person name="Perna N.T."/>
            <person name="Burland V."/>
            <person name="Riley M."/>
            <person name="Collado-Vides J."/>
            <person name="Glasner J.D."/>
            <person name="Rode C.K."/>
            <person name="Mayhew G.F."/>
            <person name="Gregor J."/>
            <person name="Davis N.W."/>
            <person name="Kirkpatrick H.A."/>
            <person name="Goeden M.A."/>
            <person name="Rose D.J."/>
            <person name="Mau B."/>
            <person name="Shao Y."/>
        </authorList>
    </citation>
    <scope>NUCLEOTIDE SEQUENCE [LARGE SCALE GENOMIC DNA]</scope>
    <source>
        <strain>K12 / MG1655 / ATCC 47076</strain>
    </source>
</reference>
<reference key="4">
    <citation type="journal article" date="2006" name="Mol. Syst. Biol.">
        <title>Highly accurate genome sequences of Escherichia coli K-12 strains MG1655 and W3110.</title>
        <authorList>
            <person name="Hayashi K."/>
            <person name="Morooka N."/>
            <person name="Yamamoto Y."/>
            <person name="Fujita K."/>
            <person name="Isono K."/>
            <person name="Choi S."/>
            <person name="Ohtsubo E."/>
            <person name="Baba T."/>
            <person name="Wanner B.L."/>
            <person name="Mori H."/>
            <person name="Horiuchi T."/>
        </authorList>
    </citation>
    <scope>NUCLEOTIDE SEQUENCE [LARGE SCALE GENOMIC DNA]</scope>
    <source>
        <strain>K12 / W3110 / ATCC 27325 / DSM 5911</strain>
    </source>
</reference>
<reference key="5">
    <citation type="journal article" date="1991" name="J. Bacteriol.">
        <title>The tdh and serA operons of Escherichia coli: mutational analysis of the regulatory elements of leucine-responsive genes.</title>
        <authorList>
            <person name="Rex J.H."/>
            <person name="Aronson B.D."/>
            <person name="Somerville R.L."/>
        </authorList>
    </citation>
    <scope>NUCLEOTIDE SEQUENCE [GENOMIC DNA] OF 154-219</scope>
    <source>
        <strain>K12</strain>
    </source>
</reference>
<reference key="6">
    <citation type="journal article" date="1997" name="Electrophoresis">
        <title>Comparing the predicted and observed properties of proteins encoded in the genome of Escherichia coli K-12.</title>
        <authorList>
            <person name="Link A.J."/>
            <person name="Robison K."/>
            <person name="Church G.M."/>
        </authorList>
    </citation>
    <scope>PROTEIN SEQUENCE OF 1-12</scope>
    <source>
        <strain>K12 / EMG2</strain>
    </source>
</reference>
<reference key="7">
    <citation type="journal article" date="1998" name="J. Mol. Biol.">
        <title>Protein identification with N and C-terminal sequence tags in proteome projects.</title>
        <authorList>
            <person name="Wilkins M.R."/>
            <person name="Gasteiger E."/>
            <person name="Tonella L."/>
            <person name="Ou K."/>
            <person name="Tyler M."/>
            <person name="Sanchez J.-C."/>
            <person name="Gooley A.A."/>
            <person name="Walsh B.J."/>
            <person name="Bairoch A."/>
            <person name="Appel R.D."/>
            <person name="Williams K.L."/>
            <person name="Hochstrasser D.F."/>
        </authorList>
    </citation>
    <scope>PROTEIN SEQUENCE OF 1-4</scope>
    <source>
        <strain>K12 / W3110 / ATCC 27325 / DSM 5911</strain>
    </source>
</reference>
<reference key="8">
    <citation type="journal article" date="1970" name="Biochim. Biophys. Acta">
        <title>Regulation of ribose metabolism in Escherichia coli. II. Evidence for two ribose-5-phosphate isomerase activities.</title>
        <authorList>
            <person name="David J."/>
            <person name="Wiesmeyer H."/>
        </authorList>
    </citation>
    <scope>FUNCTION</scope>
</reference>
<reference key="9">
    <citation type="journal article" date="1971" name="FEBS Lett.">
        <title>The regulation of ribose-5-phosphate isomerisation in Escherichia coli K12.</title>
        <authorList>
            <person name="Skinner A.J."/>
            <person name="Cooper R.A."/>
        </authorList>
    </citation>
    <scope>INDUCTION</scope>
</reference>
<reference key="10">
    <citation type="journal article" date="1975" name="Eur. J. Biochem.">
        <title>Two ribose-5-phosphate isomerases from Escherichia coli K12: partial characterisation of the enzymes and consideration of their possible physiological roles.</title>
        <authorList>
            <person name="Essenberg M.K."/>
            <person name="Cooper R.A."/>
        </authorList>
    </citation>
    <scope>FUNCTION</scope>
    <scope>CATALYTIC ACTIVITY</scope>
    <scope>BIOPHYSICOCHEMICAL PROPERTIES</scope>
    <scope>INDUCTION</scope>
</reference>
<reference key="11">
    <citation type="journal article" date="2002" name="Proteins">
        <title>Crystal structure of D-ribose-5-phosphate isomerase (RpiA) from Escherichia coli.</title>
        <authorList>
            <person name="Rangarajan E.S."/>
            <person name="Sivaraman J."/>
            <person name="Matte A."/>
            <person name="Cygler M."/>
        </authorList>
    </citation>
    <scope>X-RAY CRYSTALLOGRAPHY (2.50 ANGSTROMS)</scope>
</reference>
<reference key="12">
    <citation type="journal article" date="2003" name="Structure">
        <title>Structure of Escherichia coli ribose-5-phosphate isomerase: a ubiquitous enzyme of the pentose phosphate pathway and the Calvin cycle.</title>
        <authorList>
            <person name="Zhang R.G."/>
            <person name="Andersson C.E."/>
            <person name="Savchenko A."/>
            <person name="Skarina T."/>
            <person name="Evdokimova E."/>
            <person name="Beasley S."/>
            <person name="Arrowsmith C.H."/>
            <person name="Edwards A.M."/>
            <person name="Joachimiak A."/>
            <person name="Mowbray S.L."/>
        </authorList>
    </citation>
    <scope>X-RAY CRYSTALLOGRAPHY (1.25 ANGSTROMS) IN COMPLEX WITH SUBSTRATE ANALOGS</scope>
    <scope>FUNCTION</scope>
    <scope>CATALYTIC ACTIVITY</scope>
    <scope>MUTAGENESIS OF ASP-81; ASP-84 AND LYS-94</scope>
    <scope>ACTIVE SITE</scope>
    <scope>BIOPHYSICOCHEMICAL PROPERTIES</scope>
    <scope>ACTIVITY REGULATION</scope>
    <scope>REACTION MECHANISM</scope>
    <scope>SUBSTRATE SPECIFICITY</scope>
    <scope>INDUCTION</scope>
    <scope>SUBUNIT</scope>
</reference>
<keyword id="KW-0002">3D-structure</keyword>
<keyword id="KW-0903">Direct protein sequencing</keyword>
<keyword id="KW-0413">Isomerase</keyword>
<keyword id="KW-1185">Reference proteome</keyword>